<evidence type="ECO:0000250" key="1">
    <source>
        <dbReference type="UniProtKB" id="P42766"/>
    </source>
</evidence>
<evidence type="ECO:0000256" key="2">
    <source>
        <dbReference type="SAM" id="MobiDB-lite"/>
    </source>
</evidence>
<evidence type="ECO:0000269" key="3">
    <source>
    </source>
</evidence>
<evidence type="ECO:0000269" key="4">
    <source>
    </source>
</evidence>
<evidence type="ECO:0000269" key="5">
    <source>
    </source>
</evidence>
<evidence type="ECO:0000269" key="6">
    <source>
    </source>
</evidence>
<evidence type="ECO:0000269" key="7">
    <source>
    </source>
</evidence>
<evidence type="ECO:0000269" key="8">
    <source>
    </source>
</evidence>
<evidence type="ECO:0000269" key="9">
    <source>
    </source>
</evidence>
<evidence type="ECO:0000269" key="10">
    <source>
    </source>
</evidence>
<evidence type="ECO:0000269" key="11">
    <source>
    </source>
</evidence>
<evidence type="ECO:0000269" key="12">
    <source>
    </source>
</evidence>
<evidence type="ECO:0000269" key="13">
    <source>
    </source>
</evidence>
<evidence type="ECO:0000269" key="14">
    <source>
    </source>
</evidence>
<evidence type="ECO:0000305" key="15"/>
<evidence type="ECO:0007744" key="16">
    <source>
        <dbReference type="PDB" id="3JAG"/>
    </source>
</evidence>
<evidence type="ECO:0007744" key="17">
    <source>
        <dbReference type="PDB" id="3JAH"/>
    </source>
</evidence>
<evidence type="ECO:0007744" key="18">
    <source>
        <dbReference type="PDB" id="5LZS"/>
    </source>
</evidence>
<evidence type="ECO:0007744" key="19">
    <source>
        <dbReference type="PDB" id="5LZT"/>
    </source>
</evidence>
<evidence type="ECO:0007744" key="20">
    <source>
        <dbReference type="PDB" id="6D90"/>
    </source>
</evidence>
<evidence type="ECO:0007744" key="21">
    <source>
        <dbReference type="PDB" id="6D9J"/>
    </source>
</evidence>
<evidence type="ECO:0007744" key="22">
    <source>
        <dbReference type="PDB" id="6HCF"/>
    </source>
</evidence>
<evidence type="ECO:0007744" key="23">
    <source>
        <dbReference type="PDB" id="6HCJ"/>
    </source>
</evidence>
<evidence type="ECO:0007744" key="24">
    <source>
        <dbReference type="PDB" id="6MTB"/>
    </source>
</evidence>
<evidence type="ECO:0007744" key="25">
    <source>
        <dbReference type="PDB" id="6MTC"/>
    </source>
</evidence>
<evidence type="ECO:0007744" key="26">
    <source>
        <dbReference type="PDB" id="6P5I"/>
    </source>
</evidence>
<evidence type="ECO:0007744" key="27">
    <source>
        <dbReference type="PDB" id="6P5J"/>
    </source>
</evidence>
<evidence type="ECO:0007744" key="28">
    <source>
        <dbReference type="PDB" id="6R5Q"/>
    </source>
</evidence>
<evidence type="ECO:0007744" key="29">
    <source>
        <dbReference type="PDB" id="6R6G"/>
    </source>
</evidence>
<evidence type="ECO:0007744" key="30">
    <source>
        <dbReference type="PDB" id="6SGC"/>
    </source>
</evidence>
<evidence type="ECO:0007744" key="31">
    <source>
        <dbReference type="PDB" id="6ZVK"/>
    </source>
</evidence>
<evidence type="ECO:0007744" key="32">
    <source>
        <dbReference type="PDB" id="7A01"/>
    </source>
</evidence>
<evidence type="ECO:0007744" key="33">
    <source>
        <dbReference type="PDB" id="7OYD"/>
    </source>
</evidence>
<evidence type="ECO:0007744" key="34">
    <source>
        <dbReference type="PDB" id="7UCJ"/>
    </source>
</evidence>
<evidence type="ECO:0007744" key="35">
    <source>
        <dbReference type="PDB" id="7UCK"/>
    </source>
</evidence>
<evidence type="ECO:0007744" key="36">
    <source>
        <dbReference type="PDB" id="7ZJW"/>
    </source>
</evidence>
<evidence type="ECO:0007744" key="37">
    <source>
        <dbReference type="PDB" id="7ZJX"/>
    </source>
</evidence>
<feature type="initiator methionine" description="Removed" evidence="1">
    <location>
        <position position="1"/>
    </location>
</feature>
<feature type="chain" id="PRO_0000460125" description="Large ribosomal subunit protein uL29">
    <location>
        <begin position="2"/>
        <end position="123"/>
    </location>
</feature>
<feature type="region of interest" description="Disordered" evidence="2">
    <location>
        <begin position="85"/>
        <end position="123"/>
    </location>
</feature>
<feature type="compositionally biased region" description="Basic residues" evidence="2">
    <location>
        <begin position="86"/>
        <end position="96"/>
    </location>
</feature>
<feature type="modified residue" description="N6-acetyllysine" evidence="1">
    <location>
        <position position="19"/>
    </location>
</feature>
<feature type="modified residue" description="Phosphoserine" evidence="1">
    <location>
        <position position="29"/>
    </location>
</feature>
<feature type="modified residue" description="N6-acetyllysine" evidence="1">
    <location>
        <position position="43"/>
    </location>
</feature>
<feature type="cross-link" description="Glycyl lysine isopeptide (Lys-Gly) (interchain with G-Cter in SUMO2)" evidence="1">
    <location>
        <position position="25"/>
    </location>
</feature>
<dbReference type="RefSeq" id="XP_008271551.1">
    <property type="nucleotide sequence ID" value="XM_008273329.4"/>
</dbReference>
<dbReference type="PDB" id="3JAG">
    <property type="method" value="EM"/>
    <property type="resolution" value="3.65 A"/>
    <property type="chains" value="h=2-123"/>
</dbReference>
<dbReference type="PDB" id="3JAH">
    <property type="method" value="EM"/>
    <property type="resolution" value="3.45 A"/>
    <property type="chains" value="h=2-123"/>
</dbReference>
<dbReference type="PDB" id="3JAI">
    <property type="method" value="EM"/>
    <property type="resolution" value="3.65 A"/>
    <property type="chains" value="h=2-123"/>
</dbReference>
<dbReference type="PDB" id="5LZS">
    <property type="method" value="EM"/>
    <property type="resolution" value="3.31 A"/>
    <property type="chains" value="h=1-123"/>
</dbReference>
<dbReference type="PDB" id="5LZT">
    <property type="method" value="EM"/>
    <property type="resolution" value="3.65 A"/>
    <property type="chains" value="h=1-123"/>
</dbReference>
<dbReference type="PDB" id="5LZU">
    <property type="method" value="EM"/>
    <property type="resolution" value="3.75 A"/>
    <property type="chains" value="h=1-123"/>
</dbReference>
<dbReference type="PDB" id="5LZV">
    <property type="method" value="EM"/>
    <property type="resolution" value="3.35 A"/>
    <property type="chains" value="h=1-123"/>
</dbReference>
<dbReference type="PDB" id="5LZW">
    <property type="method" value="EM"/>
    <property type="resolution" value="3.53 A"/>
    <property type="chains" value="h=1-123"/>
</dbReference>
<dbReference type="PDB" id="5LZX">
    <property type="method" value="EM"/>
    <property type="resolution" value="3.67 A"/>
    <property type="chains" value="h=1-123"/>
</dbReference>
<dbReference type="PDB" id="5LZY">
    <property type="method" value="EM"/>
    <property type="resolution" value="3.99 A"/>
    <property type="chains" value="h=1-123"/>
</dbReference>
<dbReference type="PDB" id="5LZZ">
    <property type="method" value="EM"/>
    <property type="resolution" value="3.47 A"/>
    <property type="chains" value="h=1-123"/>
</dbReference>
<dbReference type="PDB" id="6D90">
    <property type="method" value="EM"/>
    <property type="resolution" value="3.20 A"/>
    <property type="chains" value="h=1-123"/>
</dbReference>
<dbReference type="PDB" id="6D9J">
    <property type="method" value="EM"/>
    <property type="resolution" value="3.20 A"/>
    <property type="chains" value="h=1-123"/>
</dbReference>
<dbReference type="PDB" id="6FTG">
    <property type="method" value="EM"/>
    <property type="resolution" value="9.10 A"/>
    <property type="chains" value="h=2-123"/>
</dbReference>
<dbReference type="PDB" id="6FTI">
    <property type="method" value="EM"/>
    <property type="resolution" value="4.20 A"/>
    <property type="chains" value="h=2-123"/>
</dbReference>
<dbReference type="PDB" id="6FTJ">
    <property type="method" value="EM"/>
    <property type="resolution" value="4.70 A"/>
    <property type="chains" value="h=2-123"/>
</dbReference>
<dbReference type="PDB" id="6HCF">
    <property type="method" value="EM"/>
    <property type="resolution" value="3.90 A"/>
    <property type="chains" value="h3=1-123"/>
</dbReference>
<dbReference type="PDB" id="6HCJ">
    <property type="method" value="EM"/>
    <property type="resolution" value="3.80 A"/>
    <property type="chains" value="h3=1-123"/>
</dbReference>
<dbReference type="PDB" id="6HCM">
    <property type="method" value="EM"/>
    <property type="resolution" value="6.80 A"/>
    <property type="chains" value="h3=1-123"/>
</dbReference>
<dbReference type="PDB" id="6HCQ">
    <property type="method" value="EM"/>
    <property type="resolution" value="6.50 A"/>
    <property type="chains" value="h3=1-123"/>
</dbReference>
<dbReference type="PDB" id="6MTB">
    <property type="method" value="EM"/>
    <property type="resolution" value="3.60 A"/>
    <property type="chains" value="h=2-123"/>
</dbReference>
<dbReference type="PDB" id="6MTC">
    <property type="method" value="EM"/>
    <property type="resolution" value="3.40 A"/>
    <property type="chains" value="h=2-123"/>
</dbReference>
<dbReference type="PDB" id="6MTD">
    <property type="method" value="EM"/>
    <property type="resolution" value="3.30 A"/>
    <property type="chains" value="h=2-123"/>
</dbReference>
<dbReference type="PDB" id="6MTE">
    <property type="method" value="EM"/>
    <property type="resolution" value="3.40 A"/>
    <property type="chains" value="h=2-123"/>
</dbReference>
<dbReference type="PDB" id="6P5I">
    <property type="method" value="EM"/>
    <property type="resolution" value="3.10 A"/>
    <property type="chains" value="Ah=1-123"/>
</dbReference>
<dbReference type="PDB" id="6P5J">
    <property type="method" value="EM"/>
    <property type="resolution" value="3.10 A"/>
    <property type="chains" value="Ah=1-123"/>
</dbReference>
<dbReference type="PDB" id="6P5K">
    <property type="method" value="EM"/>
    <property type="resolution" value="3.10 A"/>
    <property type="chains" value="Ah=1-123"/>
</dbReference>
<dbReference type="PDB" id="6P5N">
    <property type="method" value="EM"/>
    <property type="resolution" value="3.20 A"/>
    <property type="chains" value="Ah=1-123"/>
</dbReference>
<dbReference type="PDB" id="6R5Q">
    <property type="method" value="EM"/>
    <property type="resolution" value="3.00 A"/>
    <property type="chains" value="h=2-123"/>
</dbReference>
<dbReference type="PDB" id="6R6G">
    <property type="method" value="EM"/>
    <property type="resolution" value="3.70 A"/>
    <property type="chains" value="h=2-123"/>
</dbReference>
<dbReference type="PDB" id="6R6P">
    <property type="method" value="EM"/>
    <property type="resolution" value="3.10 A"/>
    <property type="chains" value="h=2-123"/>
</dbReference>
<dbReference type="PDB" id="6R7Q">
    <property type="method" value="EM"/>
    <property type="resolution" value="3.90 A"/>
    <property type="chains" value="h=2-123"/>
</dbReference>
<dbReference type="PDB" id="6SGC">
    <property type="method" value="EM"/>
    <property type="resolution" value="2.80 A"/>
    <property type="chains" value="h2=1-123"/>
</dbReference>
<dbReference type="PDB" id="6T59">
    <property type="method" value="EM"/>
    <property type="resolution" value="3.11 A"/>
    <property type="chains" value="h3=1-123"/>
</dbReference>
<dbReference type="PDB" id="6ZVK">
    <property type="method" value="EM"/>
    <property type="resolution" value="3.49 A"/>
    <property type="chains" value="A2=2-123"/>
</dbReference>
<dbReference type="PDB" id="7A01">
    <property type="method" value="EM"/>
    <property type="resolution" value="3.60 A"/>
    <property type="chains" value="A2=2-123"/>
</dbReference>
<dbReference type="PDB" id="7MDZ">
    <property type="method" value="EM"/>
    <property type="resolution" value="3.20 A"/>
    <property type="chains" value="h=1-123"/>
</dbReference>
<dbReference type="PDB" id="7NFX">
    <property type="method" value="EM"/>
    <property type="resolution" value="3.20 A"/>
    <property type="chains" value="h=1-123"/>
</dbReference>
<dbReference type="PDB" id="7NWG">
    <property type="method" value="EM"/>
    <property type="resolution" value="3.80 A"/>
    <property type="chains" value="h3=2-123"/>
</dbReference>
<dbReference type="PDB" id="7NWH">
    <property type="method" value="EM"/>
    <property type="resolution" value="4.10 A"/>
    <property type="chains" value="h=1-123"/>
</dbReference>
<dbReference type="PDB" id="7NWI">
    <property type="method" value="EM"/>
    <property type="resolution" value="3.13 A"/>
    <property type="chains" value="h=2-123"/>
</dbReference>
<dbReference type="PDB" id="7O7Y">
    <property type="method" value="EM"/>
    <property type="resolution" value="2.20 A"/>
    <property type="chains" value="Bh=1-123"/>
</dbReference>
<dbReference type="PDB" id="7O7Z">
    <property type="method" value="EM"/>
    <property type="resolution" value="2.40 A"/>
    <property type="chains" value="Bh=1-123"/>
</dbReference>
<dbReference type="PDB" id="7O80">
    <property type="method" value="EM"/>
    <property type="resolution" value="2.90 A"/>
    <property type="chains" value="Bh=1-123"/>
</dbReference>
<dbReference type="PDB" id="7O81">
    <property type="method" value="EM"/>
    <property type="resolution" value="3.10 A"/>
    <property type="chains" value="Bh=1-123"/>
</dbReference>
<dbReference type="PDB" id="7OBR">
    <property type="method" value="EM"/>
    <property type="resolution" value="2.80 A"/>
    <property type="chains" value="h=1-123"/>
</dbReference>
<dbReference type="PDB" id="7OYD">
    <property type="method" value="EM"/>
    <property type="resolution" value="2.30 A"/>
    <property type="chains" value="h=1-123"/>
</dbReference>
<dbReference type="PDB" id="7QWQ">
    <property type="method" value="EM"/>
    <property type="resolution" value="2.83 A"/>
    <property type="chains" value="h=1-123"/>
</dbReference>
<dbReference type="PDB" id="7QWR">
    <property type="method" value="EM"/>
    <property type="resolution" value="2.90 A"/>
    <property type="chains" value="h=1-123"/>
</dbReference>
<dbReference type="PDB" id="7QWS">
    <property type="method" value="EM"/>
    <property type="resolution" value="3.40 A"/>
    <property type="chains" value="h=1-123"/>
</dbReference>
<dbReference type="PDB" id="7TM3">
    <property type="method" value="EM"/>
    <property type="resolution" value="3.25 A"/>
    <property type="chains" value="h=1-123"/>
</dbReference>
<dbReference type="PDB" id="7TOQ">
    <property type="method" value="EM"/>
    <property type="resolution" value="3.10 A"/>
    <property type="chains" value="AL35=2-123"/>
</dbReference>
<dbReference type="PDB" id="7TOR">
    <property type="method" value="EM"/>
    <property type="resolution" value="2.90 A"/>
    <property type="chains" value="AL35=2-123"/>
</dbReference>
<dbReference type="PDB" id="7TUT">
    <property type="method" value="EM"/>
    <property type="resolution" value="3.88 A"/>
    <property type="chains" value="h=1-123"/>
</dbReference>
<dbReference type="PDB" id="7UCJ">
    <property type="method" value="EM"/>
    <property type="resolution" value="3.10 A"/>
    <property type="chains" value="h=2-123"/>
</dbReference>
<dbReference type="PDB" id="7UCK">
    <property type="method" value="EM"/>
    <property type="resolution" value="2.80 A"/>
    <property type="chains" value="h=2-123"/>
</dbReference>
<dbReference type="PDB" id="7ZJW">
    <property type="method" value="EM"/>
    <property type="resolution" value="2.80 A"/>
    <property type="chains" value="Lk=1-123"/>
</dbReference>
<dbReference type="PDB" id="7ZJX">
    <property type="method" value="EM"/>
    <property type="resolution" value="3.10 A"/>
    <property type="chains" value="Lk=1-123"/>
</dbReference>
<dbReference type="PDB" id="8B5L">
    <property type="method" value="EM"/>
    <property type="resolution" value="2.86 A"/>
    <property type="chains" value="h=2-123"/>
</dbReference>
<dbReference type="PDB" id="8B6C">
    <property type="method" value="EM"/>
    <property type="resolution" value="2.79 A"/>
    <property type="chains" value="h=2-123"/>
</dbReference>
<dbReference type="PDB" id="8BHF">
    <property type="method" value="EM"/>
    <property type="resolution" value="3.10 A"/>
    <property type="chains" value="U1=2-123"/>
</dbReference>
<dbReference type="PDB" id="8BPO">
    <property type="method" value="EM"/>
    <property type="resolution" value="2.80 A"/>
    <property type="chains" value="g2=2-123"/>
</dbReference>
<dbReference type="PDB" id="8BTK">
    <property type="method" value="EM"/>
    <property type="resolution" value="3.50 A"/>
    <property type="chains" value="Bh=1-123"/>
</dbReference>
<dbReference type="PDB" id="8P2K">
    <property type="method" value="EM"/>
    <property type="resolution" value="2.90 A"/>
    <property type="chains" value="Bh=1-123"/>
</dbReference>
<dbReference type="PDB" id="8RJB">
    <property type="method" value="EM"/>
    <property type="resolution" value="2.69 A"/>
    <property type="chains" value="h=1-123"/>
</dbReference>
<dbReference type="PDB" id="8RJC">
    <property type="method" value="EM"/>
    <property type="resolution" value="2.90 A"/>
    <property type="chains" value="h=1-123"/>
</dbReference>
<dbReference type="PDB" id="8RJD">
    <property type="method" value="EM"/>
    <property type="resolution" value="2.79 A"/>
    <property type="chains" value="h=1-123"/>
</dbReference>
<dbReference type="PDB" id="8SCB">
    <property type="method" value="EM"/>
    <property type="resolution" value="2.50 A"/>
    <property type="chains" value="h=1-123"/>
</dbReference>
<dbReference type="PDB" id="8VFT">
    <property type="method" value="EM"/>
    <property type="resolution" value="3.30 A"/>
    <property type="chains" value="h=1-123"/>
</dbReference>
<dbReference type="PDB" id="9BDL">
    <property type="method" value="EM"/>
    <property type="resolution" value="2.80 A"/>
    <property type="chains" value="AL35=2-123"/>
</dbReference>
<dbReference type="PDB" id="9BDN">
    <property type="method" value="EM"/>
    <property type="resolution" value="3.10 A"/>
    <property type="chains" value="AL35=2-123"/>
</dbReference>
<dbReference type="PDB" id="9BDP">
    <property type="method" value="EM"/>
    <property type="resolution" value="3.70 A"/>
    <property type="chains" value="AL35=2-123"/>
</dbReference>
<dbReference type="PDB" id="9F1B">
    <property type="method" value="EM"/>
    <property type="resolution" value="3.01 A"/>
    <property type="chains" value="Bh=1-123"/>
</dbReference>
<dbReference type="PDB" id="9F1C">
    <property type="method" value="EM"/>
    <property type="resolution" value="3.78 A"/>
    <property type="chains" value="Bh=1-123"/>
</dbReference>
<dbReference type="PDB" id="9F1D">
    <property type="method" value="EM"/>
    <property type="resolution" value="3.26 A"/>
    <property type="chains" value="Bh=1-123"/>
</dbReference>
<dbReference type="PDBsum" id="3JAG"/>
<dbReference type="PDBsum" id="3JAH"/>
<dbReference type="PDBsum" id="3JAI"/>
<dbReference type="PDBsum" id="5LZS"/>
<dbReference type="PDBsum" id="5LZT"/>
<dbReference type="PDBsum" id="5LZU"/>
<dbReference type="PDBsum" id="5LZV"/>
<dbReference type="PDBsum" id="5LZW"/>
<dbReference type="PDBsum" id="5LZX"/>
<dbReference type="PDBsum" id="5LZY"/>
<dbReference type="PDBsum" id="5LZZ"/>
<dbReference type="PDBsum" id="6D90"/>
<dbReference type="PDBsum" id="6D9J"/>
<dbReference type="PDBsum" id="6FTG"/>
<dbReference type="PDBsum" id="6FTI"/>
<dbReference type="PDBsum" id="6FTJ"/>
<dbReference type="PDBsum" id="6HCF"/>
<dbReference type="PDBsum" id="6HCJ"/>
<dbReference type="PDBsum" id="6HCM"/>
<dbReference type="PDBsum" id="6HCQ"/>
<dbReference type="PDBsum" id="6MTB"/>
<dbReference type="PDBsum" id="6MTC"/>
<dbReference type="PDBsum" id="6MTD"/>
<dbReference type="PDBsum" id="6MTE"/>
<dbReference type="PDBsum" id="6P5I"/>
<dbReference type="PDBsum" id="6P5J"/>
<dbReference type="PDBsum" id="6P5K"/>
<dbReference type="PDBsum" id="6P5N"/>
<dbReference type="PDBsum" id="6R5Q"/>
<dbReference type="PDBsum" id="6R6G"/>
<dbReference type="PDBsum" id="6R6P"/>
<dbReference type="PDBsum" id="6R7Q"/>
<dbReference type="PDBsum" id="6SGC"/>
<dbReference type="PDBsum" id="6T59"/>
<dbReference type="PDBsum" id="6ZVK"/>
<dbReference type="PDBsum" id="7A01"/>
<dbReference type="PDBsum" id="7MDZ"/>
<dbReference type="PDBsum" id="7NFX"/>
<dbReference type="PDBsum" id="7NWG"/>
<dbReference type="PDBsum" id="7NWH"/>
<dbReference type="PDBsum" id="7NWI"/>
<dbReference type="PDBsum" id="7O7Y"/>
<dbReference type="PDBsum" id="7O7Z"/>
<dbReference type="PDBsum" id="7O80"/>
<dbReference type="PDBsum" id="7O81"/>
<dbReference type="PDBsum" id="7OBR"/>
<dbReference type="PDBsum" id="7OYD"/>
<dbReference type="PDBsum" id="7QWQ"/>
<dbReference type="PDBsum" id="7QWR"/>
<dbReference type="PDBsum" id="7QWS"/>
<dbReference type="PDBsum" id="7TM3"/>
<dbReference type="PDBsum" id="7TOQ"/>
<dbReference type="PDBsum" id="7TOR"/>
<dbReference type="PDBsum" id="7TUT"/>
<dbReference type="PDBsum" id="7UCJ"/>
<dbReference type="PDBsum" id="7UCK"/>
<dbReference type="PDBsum" id="7ZJW"/>
<dbReference type="PDBsum" id="7ZJX"/>
<dbReference type="PDBsum" id="8B5L"/>
<dbReference type="PDBsum" id="8B6C"/>
<dbReference type="PDBsum" id="8BHF"/>
<dbReference type="PDBsum" id="8BPO"/>
<dbReference type="PDBsum" id="8BTK"/>
<dbReference type="PDBsum" id="8P2K"/>
<dbReference type="PDBsum" id="8RJB"/>
<dbReference type="PDBsum" id="8RJC"/>
<dbReference type="PDBsum" id="8RJD"/>
<dbReference type="PDBsum" id="8SCB"/>
<dbReference type="PDBsum" id="8VFT"/>
<dbReference type="PDBsum" id="9BDL"/>
<dbReference type="PDBsum" id="9BDN"/>
<dbReference type="PDBsum" id="9BDP"/>
<dbReference type="PDBsum" id="9F1B"/>
<dbReference type="PDBsum" id="9F1C"/>
<dbReference type="PDBsum" id="9F1D"/>
<dbReference type="EMDB" id="EMD-0099"/>
<dbReference type="EMDB" id="EMD-0100"/>
<dbReference type="EMDB" id="EMD-0192"/>
<dbReference type="EMDB" id="EMD-0194"/>
<dbReference type="EMDB" id="EMD-0195"/>
<dbReference type="EMDB" id="EMD-0197"/>
<dbReference type="EMDB" id="EMD-10181"/>
<dbReference type="EMDB" id="EMD-10380"/>
<dbReference type="EMDB" id="EMD-11459"/>
<dbReference type="EMDB" id="EMD-11590"/>
<dbReference type="EMDB" id="EMD-12303"/>
<dbReference type="EMDB" id="EMD-12631"/>
<dbReference type="EMDB" id="EMD-12632"/>
<dbReference type="EMDB" id="EMD-12633"/>
<dbReference type="EMDB" id="EMD-12756"/>
<dbReference type="EMDB" id="EMD-12757"/>
<dbReference type="EMDB" id="EMD-12758"/>
<dbReference type="EMDB" id="EMD-12759"/>
<dbReference type="EMDB" id="EMD-12801"/>
<dbReference type="EMDB" id="EMD-13114"/>
<dbReference type="EMDB" id="EMD-14191"/>
<dbReference type="EMDB" id="EMD-14192"/>
<dbReference type="EMDB" id="EMD-14193"/>
<dbReference type="EMDB" id="EMD-14751"/>
<dbReference type="EMDB" id="EMD-14752"/>
<dbReference type="EMDB" id="EMD-15860"/>
<dbReference type="EMDB" id="EMD-15863"/>
<dbReference type="EMDB" id="EMD-16052"/>
<dbReference type="EMDB" id="EMD-16155"/>
<dbReference type="EMDB" id="EMD-16232"/>
<dbReference type="EMDB" id="EMD-17367"/>
<dbReference type="EMDB" id="EMD-19195"/>
<dbReference type="EMDB" id="EMD-19197"/>
<dbReference type="EMDB" id="EMD-19198"/>
<dbReference type="EMDB" id="EMD-20255"/>
<dbReference type="EMDB" id="EMD-20256"/>
<dbReference type="EMDB" id="EMD-20257"/>
<dbReference type="EMDB" id="EMD-20258"/>
<dbReference type="EMDB" id="EMD-23785"/>
<dbReference type="EMDB" id="EMD-25994"/>
<dbReference type="EMDB" id="EMD-26035"/>
<dbReference type="EMDB" id="EMD-26036"/>
<dbReference type="EMDB" id="EMD-26133"/>
<dbReference type="EMDB" id="EMD-26444"/>
<dbReference type="EMDB" id="EMD-26445"/>
<dbReference type="EMDB" id="EMD-40344"/>
<dbReference type="EMDB" id="EMD-4130"/>
<dbReference type="EMDB" id="EMD-4131"/>
<dbReference type="EMDB" id="EMD-4132"/>
<dbReference type="EMDB" id="EMD-4133"/>
<dbReference type="EMDB" id="EMD-4134"/>
<dbReference type="EMDB" id="EMD-4135"/>
<dbReference type="EMDB" id="EMD-4136"/>
<dbReference type="EMDB" id="EMD-4137"/>
<dbReference type="EMDB" id="EMD-4300"/>
<dbReference type="EMDB" id="EMD-4316"/>
<dbReference type="EMDB" id="EMD-4317"/>
<dbReference type="EMDB" id="EMD-43189"/>
<dbReference type="EMDB" id="EMD-44461"/>
<dbReference type="EMDB" id="EMD-44463"/>
<dbReference type="EMDB" id="EMD-44464"/>
<dbReference type="EMDB" id="EMD-4729"/>
<dbReference type="EMDB" id="EMD-4735"/>
<dbReference type="EMDB" id="EMD-4737"/>
<dbReference type="EMDB" id="EMD-4745"/>
<dbReference type="EMDB" id="EMD-50124"/>
<dbReference type="EMDB" id="EMD-50125"/>
<dbReference type="EMDB" id="EMD-50126"/>
<dbReference type="EMDB" id="EMD-7834"/>
<dbReference type="EMDB" id="EMD-7836"/>
<dbReference type="EMDB" id="EMD-9237"/>
<dbReference type="EMDB" id="EMD-9239"/>
<dbReference type="EMDB" id="EMD-9240"/>
<dbReference type="EMDB" id="EMD-9242"/>
<dbReference type="SMR" id="G1SIT5"/>
<dbReference type="IntAct" id="G1SIT5">
    <property type="interactions" value="1"/>
</dbReference>
<dbReference type="PaxDb" id="9986-ENSOCUP00000002605"/>
<dbReference type="Ensembl" id="ENSOCUT00000002996.2">
    <property type="protein sequence ID" value="ENSOCUP00000002605.2"/>
    <property type="gene ID" value="ENSOCUG00000002996.3"/>
</dbReference>
<dbReference type="GeneID" id="100339185"/>
<dbReference type="KEGG" id="ocu:100339185"/>
<dbReference type="CTD" id="11224"/>
<dbReference type="eggNOG" id="KOG3436">
    <property type="taxonomic scope" value="Eukaryota"/>
</dbReference>
<dbReference type="GeneTree" id="ENSGT00390000016384"/>
<dbReference type="HOGENOM" id="CLU_110381_1_1_1"/>
<dbReference type="OMA" id="VMNQKAR"/>
<dbReference type="OrthoDB" id="528635at2759"/>
<dbReference type="TreeFam" id="TF314951"/>
<dbReference type="Proteomes" id="UP000001811">
    <property type="component" value="Unplaced"/>
</dbReference>
<dbReference type="Bgee" id="ENSOCUG00000002996">
    <property type="expression patterns" value="Expressed in uterus and 17 other cell types or tissues"/>
</dbReference>
<dbReference type="GO" id="GO:0022625">
    <property type="term" value="C:cytosolic large ribosomal subunit"/>
    <property type="evidence" value="ECO:0007669"/>
    <property type="project" value="InterPro"/>
</dbReference>
<dbReference type="GO" id="GO:0003729">
    <property type="term" value="F:mRNA binding"/>
    <property type="evidence" value="ECO:0007669"/>
    <property type="project" value="TreeGrafter"/>
</dbReference>
<dbReference type="GO" id="GO:0003735">
    <property type="term" value="F:structural constituent of ribosome"/>
    <property type="evidence" value="ECO:0007669"/>
    <property type="project" value="InterPro"/>
</dbReference>
<dbReference type="GO" id="GO:0000463">
    <property type="term" value="P:maturation of LSU-rRNA from tricistronic rRNA transcript (SSU-rRNA, 5.8S rRNA, LSU-rRNA)"/>
    <property type="evidence" value="ECO:0007669"/>
    <property type="project" value="InterPro"/>
</dbReference>
<dbReference type="GO" id="GO:0006412">
    <property type="term" value="P:translation"/>
    <property type="evidence" value="ECO:0007669"/>
    <property type="project" value="InterPro"/>
</dbReference>
<dbReference type="CDD" id="cd00427">
    <property type="entry name" value="Ribosomal_L29_HIP"/>
    <property type="match status" value="1"/>
</dbReference>
<dbReference type="FunFam" id="1.10.287.310:FF:000002">
    <property type="entry name" value="60S ribosomal protein L35"/>
    <property type="match status" value="1"/>
</dbReference>
<dbReference type="FunFam" id="6.10.250.3450:FF:000001">
    <property type="entry name" value="60S ribosomal protein L35"/>
    <property type="match status" value="1"/>
</dbReference>
<dbReference type="Gene3D" id="1.10.287.310">
    <property type="match status" value="1"/>
</dbReference>
<dbReference type="Gene3D" id="6.10.250.3450">
    <property type="match status" value="1"/>
</dbReference>
<dbReference type="HAMAP" id="MF_00374">
    <property type="entry name" value="Ribosomal_uL29"/>
    <property type="match status" value="1"/>
</dbReference>
<dbReference type="InterPro" id="IPR001854">
    <property type="entry name" value="Ribosomal_uL29"/>
</dbReference>
<dbReference type="InterPro" id="IPR018254">
    <property type="entry name" value="Ribosomal_uL29_CS"/>
</dbReference>
<dbReference type="InterPro" id="IPR045059">
    <property type="entry name" value="Ribosomal_uL29_euk"/>
</dbReference>
<dbReference type="InterPro" id="IPR036049">
    <property type="entry name" value="Ribosomal_uL29_sf"/>
</dbReference>
<dbReference type="NCBIfam" id="TIGR00012">
    <property type="entry name" value="L29"/>
    <property type="match status" value="1"/>
</dbReference>
<dbReference type="PANTHER" id="PTHR45722">
    <property type="entry name" value="60S RIBOSOMAL PROTEIN L35"/>
    <property type="match status" value="1"/>
</dbReference>
<dbReference type="PANTHER" id="PTHR45722:SF2">
    <property type="entry name" value="LARGE RIBOSOMAL SUBUNIT PROTEIN UL29-RELATED"/>
    <property type="match status" value="1"/>
</dbReference>
<dbReference type="Pfam" id="PF00831">
    <property type="entry name" value="Ribosomal_L29"/>
    <property type="match status" value="1"/>
</dbReference>
<dbReference type="SUPFAM" id="SSF46561">
    <property type="entry name" value="Ribosomal protein L29 (L29p)"/>
    <property type="match status" value="1"/>
</dbReference>
<dbReference type="PROSITE" id="PS00579">
    <property type="entry name" value="RIBOSOMAL_L29"/>
    <property type="match status" value="1"/>
</dbReference>
<name>RL35_RABIT</name>
<comment type="function">
    <text evidence="3 4">Component of the large ribosomal subunit (PubMed:26245381, PubMed:27863242). The ribosome is a large ribonucleoprotein complex responsible for the synthesis of proteins in the cell (PubMed:26245381, PubMed:27863242).</text>
</comment>
<comment type="subunit">
    <text evidence="3 4 5 6 7 8 9 10 11 12 13 14">Component of the large ribosomal subunit.</text>
</comment>
<comment type="subcellular location">
    <subcellularLocation>
        <location evidence="3 4 5 6 7 8 9 10 11 12 13 14">Cytoplasm</location>
    </subcellularLocation>
</comment>
<comment type="similarity">
    <text evidence="15">Belongs to the universal ribosomal protein uL29 family.</text>
</comment>
<reference key="1">
    <citation type="journal article" date="2011" name="Nature">
        <title>A high-resolution map of human evolutionary constraint using 29 mammals.</title>
        <authorList>
            <person name="Lindblad-Toh K."/>
            <person name="Garber M."/>
            <person name="Zuk O."/>
            <person name="Lin M.F."/>
            <person name="Parker B.J."/>
            <person name="Washietl S."/>
            <person name="Kheradpour P."/>
            <person name="Ernst J."/>
            <person name="Jordan G."/>
            <person name="Mauceli E."/>
            <person name="Ward L.D."/>
            <person name="Lowe C.B."/>
            <person name="Holloway A.K."/>
            <person name="Clamp M."/>
            <person name="Gnerre S."/>
            <person name="Alfoldi J."/>
            <person name="Beal K."/>
            <person name="Chang J."/>
            <person name="Clawson H."/>
            <person name="Cuff J."/>
            <person name="Di Palma F."/>
            <person name="Fitzgerald S."/>
            <person name="Flicek P."/>
            <person name="Guttman M."/>
            <person name="Hubisz M.J."/>
            <person name="Jaffe D.B."/>
            <person name="Jungreis I."/>
            <person name="Kent W.J."/>
            <person name="Kostka D."/>
            <person name="Lara M."/>
            <person name="Martins A.L."/>
            <person name="Massingham T."/>
            <person name="Moltke I."/>
            <person name="Raney B.J."/>
            <person name="Rasmussen M.D."/>
            <person name="Robinson J."/>
            <person name="Stark A."/>
            <person name="Vilella A.J."/>
            <person name="Wen J."/>
            <person name="Xie X."/>
            <person name="Zody M.C."/>
            <person name="Baldwin J."/>
            <person name="Bloom T."/>
            <person name="Chin C.W."/>
            <person name="Heiman D."/>
            <person name="Nicol R."/>
            <person name="Nusbaum C."/>
            <person name="Young S."/>
            <person name="Wilkinson J."/>
            <person name="Worley K.C."/>
            <person name="Kovar C.L."/>
            <person name="Muzny D.M."/>
            <person name="Gibbs R.A."/>
            <person name="Cree A."/>
            <person name="Dihn H.H."/>
            <person name="Fowler G."/>
            <person name="Jhangiani S."/>
            <person name="Joshi V."/>
            <person name="Lee S."/>
            <person name="Lewis L.R."/>
            <person name="Nazareth L.V."/>
            <person name="Okwuonu G."/>
            <person name="Santibanez J."/>
            <person name="Warren W.C."/>
            <person name="Mardis E.R."/>
            <person name="Weinstock G.M."/>
            <person name="Wilson R.K."/>
            <person name="Delehaunty K."/>
            <person name="Dooling D."/>
            <person name="Fronik C."/>
            <person name="Fulton L."/>
            <person name="Fulton B."/>
            <person name="Graves T."/>
            <person name="Minx P."/>
            <person name="Sodergren E."/>
            <person name="Birney E."/>
            <person name="Margulies E.H."/>
            <person name="Herrero J."/>
            <person name="Green E.D."/>
            <person name="Haussler D."/>
            <person name="Siepel A."/>
            <person name="Goldman N."/>
            <person name="Pollard K.S."/>
            <person name="Pedersen J.S."/>
            <person name="Lander E.S."/>
            <person name="Kellis M."/>
        </authorList>
    </citation>
    <scope>NUCLEOTIDE SEQUENCE [LARGE SCALE GENOMIC DNA]</scope>
    <source>
        <strain>Thorbecke</strain>
    </source>
</reference>
<reference evidence="16 17" key="2">
    <citation type="journal article" date="2015" name="Nature">
        <title>Structural basis for stop codon recognition in eukaryotes.</title>
        <authorList>
            <person name="Brown A."/>
            <person name="Shao S."/>
            <person name="Murray J."/>
            <person name="Hegde R.S."/>
            <person name="Ramakrishnan V."/>
        </authorList>
    </citation>
    <scope>STRUCTURE BY ELECTRON MICROSCOPY (3.45 ANGSTROMS) OF 2-123 OF RIBOSOME</scope>
    <scope>FUNCTION</scope>
    <scope>SUBCELLULAR LOCATION</scope>
    <scope>SUBUNIT</scope>
</reference>
<reference evidence="18 19" key="3">
    <citation type="journal article" date="2016" name="Cell">
        <title>Decoding mammalian ribosome-mRNA states by translational GTPase complexes.</title>
        <authorList>
            <person name="Shao S."/>
            <person name="Murray J."/>
            <person name="Brown A."/>
            <person name="Taunton J."/>
            <person name="Ramakrishnan V."/>
            <person name="Hegde R.S."/>
        </authorList>
    </citation>
    <scope>STRUCTURE BY ELECTRON MICROSCOPY (3.31 ANGSTROMS) OF RIBOSOME</scope>
    <scope>FUNCTION</scope>
    <scope>SUBCELLULAR LOCATION</scope>
    <scope>SUBUNIT</scope>
</reference>
<reference evidence="20 21" key="4">
    <citation type="journal article" date="2018" name="Elife">
        <title>Dual tRNA mimicry in the Cricket paralysis virus IRES uncovers an unexpected similarity with the Hepatitis C Virus IRES.</title>
        <authorList>
            <person name="Pisareva V.P."/>
            <person name="Pisarev A.V."/>
            <person name="Fernandez I.S."/>
        </authorList>
    </citation>
    <scope>STRUCTURE BY ELECTRON MICROSCOPY (3.20 ANGSTROMS) OF RIBOSOME</scope>
    <scope>SUBCELLULAR LOCATION</scope>
    <scope>SUBUNIT</scope>
</reference>
<reference evidence="24 25" key="5">
    <citation type="journal article" date="2018" name="Elife">
        <title>Structures of translationally inactive mammalian ribosomes.</title>
        <authorList>
            <person name="Brown A."/>
            <person name="Baird M.R."/>
            <person name="Yip M.C."/>
            <person name="Murray J."/>
            <person name="Shao S."/>
        </authorList>
    </citation>
    <scope>STRUCTURE BY ELECTRON MICROSCOPY (3.30 ANGSTROMS) OF 2-123 OF RIBOSOME</scope>
    <scope>SUBCELLULAR LOCATION</scope>
    <scope>SUBUNIT</scope>
</reference>
<reference evidence="22 23" key="6">
    <citation type="journal article" date="2018" name="Mol. Cell">
        <title>ZNF598 is a quality control sensor of collided ribosomes.</title>
        <authorList>
            <person name="Juszkiewicz S."/>
            <person name="Chandrasekaran V."/>
            <person name="Lin Z."/>
            <person name="Kraatz S."/>
            <person name="Ramakrishnan V."/>
            <person name="Hegde R.S."/>
        </authorList>
    </citation>
    <scope>STRUCTURE BY ELECTRON MICROSCOPY (3.80 ANGSTROMS) OF RIBOSOME</scope>
    <scope>SUBCELLULAR LOCATION</scope>
    <scope>SUBUNIT</scope>
</reference>
<reference evidence="28 29" key="7">
    <citation type="journal article" date="2019" name="Elife">
        <title>Structural and mutational analysis of the ribosome-arresting human XBP1u.</title>
        <authorList>
            <person name="Shanmuganathan V."/>
            <person name="Schiller N."/>
            <person name="Magoulopoulou A."/>
            <person name="Cheng J."/>
            <person name="Braunger K."/>
            <person name="Cymer F."/>
            <person name="Berninghausen O."/>
            <person name="Beatrix B."/>
            <person name="Kohno K."/>
            <person name="von Heijne G."/>
            <person name="Beckmann R."/>
        </authorList>
    </citation>
    <scope>STRUCTURE BY ELECTRON MICROSCOPY (3.00 ANGSTROMS) OF 2-123 OF RIBOSOME</scope>
    <scope>SUBCELLULAR LOCATION</scope>
    <scope>SUBUNIT</scope>
</reference>
<reference evidence="26 27" key="8">
    <citation type="journal article" date="2019" name="EMBO J.">
        <title>The Israeli acute paralysis virus IRES captures host ribosomes by mimicking a ribosomal state with hybrid tRNAs.</title>
        <authorList>
            <person name="Acosta-Reyes F."/>
            <person name="Neupane R."/>
            <person name="Frank J."/>
            <person name="Fernandez I.S."/>
        </authorList>
    </citation>
    <scope>STRUCTURE BY ELECTRON MICROSCOPY (3.10 ANGSTROMS) OF RIBOSOME</scope>
    <scope>SUBCELLULAR LOCATION</scope>
    <scope>SUBUNIT</scope>
</reference>
<reference evidence="30" key="9">
    <citation type="journal article" date="2019" name="Nat. Struct. Mol. Biol.">
        <title>Mechanism of ribosome stalling during translation of a poly(A) tail.</title>
        <authorList>
            <person name="Chandrasekaran V."/>
            <person name="Juszkiewicz S."/>
            <person name="Choi J."/>
            <person name="Puglisi J.D."/>
            <person name="Brown A."/>
            <person name="Shao S."/>
            <person name="Ramakrishnan V."/>
            <person name="Hegde R.S."/>
        </authorList>
    </citation>
    <scope>STRUCTURE BY ELECTRON MICROSCOPY (2.80 ANGSTROMS) OF RIBOSOME</scope>
    <scope>SUBCELLULAR LOCATION</scope>
    <scope>SUBUNIT</scope>
</reference>
<reference evidence="31 32" key="10">
    <citation type="journal article" date="2020" name="Cell Rep.">
        <title>The Halastavi arva virus intergenic region IRES promotes translation by the simplest possible initiation mechanism.</title>
        <authorList>
            <person name="Abaeva I.S."/>
            <person name="Vicens Q."/>
            <person name="Bochler A."/>
            <person name="Soufari H."/>
            <person name="Simonetti A."/>
            <person name="Pestova T.V."/>
            <person name="Hashem Y."/>
            <person name="Hellen C.U.T."/>
        </authorList>
    </citation>
    <scope>STRUCTURE BY ELECTRON MICROSCOPY (3.49 ANGSTROMS) OF 2-123 OF RIBOSOME</scope>
    <scope>SUBCELLULAR LOCATION</scope>
    <scope>SUBUNIT</scope>
</reference>
<reference evidence="34 35" key="11">
    <citation type="journal article" date="2022" name="Mol. Cell">
        <title>Direct epitranscriptomic regulation of mammalian translation initiation through N4-acetylcytidine.</title>
        <authorList>
            <person name="Arango D."/>
            <person name="Sturgill D."/>
            <person name="Yang R."/>
            <person name="Kanai T."/>
            <person name="Bauer P."/>
            <person name="Roy J."/>
            <person name="Wang Z."/>
            <person name="Hosogane M."/>
            <person name="Schiffers S."/>
            <person name="Oberdoerffer S."/>
        </authorList>
    </citation>
    <scope>STRUCTURE BY ELECTRON MICROSCOPY (2.80 ANGSTROMS) OF 2-123 OF RIBOSOME</scope>
    <scope>SUBCELLULAR LOCATION</scope>
    <scope>SUBUNIT</scope>
</reference>
<reference evidence="36 37" key="12">
    <citation type="journal article" date="2022" name="Science">
        <title>Structure of the mammalian ribosome as it decodes the selenocysteine UGA codon.</title>
        <authorList>
            <person name="Hilal T."/>
            <person name="Killam B.Y."/>
            <person name="Grozdanovic M."/>
            <person name="Dobosz-Bartoszek M."/>
            <person name="Loerke J."/>
            <person name="Buerger J."/>
            <person name="Mielke T."/>
            <person name="Copeland P.R."/>
            <person name="Simonovic M."/>
            <person name="Spahn C.M.T."/>
        </authorList>
    </citation>
    <scope>STRUCTURE BY ELECTRON MICROSCOPY (2.80 ANGSTROMS) OF RIBOSOME</scope>
    <scope>SUBCELLULAR LOCATION</scope>
    <scope>SUBUNIT</scope>
</reference>
<reference evidence="33" key="13">
    <citation type="journal article" date="2023" name="Nature">
        <title>A molecular network of conserved factors keeps ribosomes dormant in the egg.</title>
        <authorList>
            <person name="Leesch F."/>
            <person name="Lorenzo-Orts L."/>
            <person name="Pribitzer C."/>
            <person name="Grishkovskaya I."/>
            <person name="Roehsner J."/>
            <person name="Chugunova A."/>
            <person name="Matzinger M."/>
            <person name="Roitinger E."/>
            <person name="Belacic K."/>
            <person name="Kandolf S."/>
            <person name="Lin T.Y."/>
            <person name="Mechtler K."/>
            <person name="Meinhart A."/>
            <person name="Haselbach D."/>
            <person name="Pauli A."/>
        </authorList>
    </citation>
    <scope>STRUCTURE BY ELECTRON MICROSCOPY (2.30 ANGSTROMS) OF RIBOSOME</scope>
    <scope>SUBCELLULAR LOCATION</scope>
    <scope>SUBUNIT</scope>
</reference>
<accession>G1SIT5</accession>
<gene>
    <name type="primary">RPL35</name>
</gene>
<protein>
    <recommendedName>
        <fullName>Large ribosomal subunit protein uL29</fullName>
    </recommendedName>
    <alternativeName>
        <fullName>60S ribosomal protein L35</fullName>
    </alternativeName>
</protein>
<organism>
    <name type="scientific">Oryctolagus cuniculus</name>
    <name type="common">Rabbit</name>
    <dbReference type="NCBI Taxonomy" id="9986"/>
    <lineage>
        <taxon>Eukaryota</taxon>
        <taxon>Metazoa</taxon>
        <taxon>Chordata</taxon>
        <taxon>Craniata</taxon>
        <taxon>Vertebrata</taxon>
        <taxon>Euteleostomi</taxon>
        <taxon>Mammalia</taxon>
        <taxon>Eutheria</taxon>
        <taxon>Euarchontoglires</taxon>
        <taxon>Glires</taxon>
        <taxon>Lagomorpha</taxon>
        <taxon>Leporidae</taxon>
        <taxon>Oryctolagus</taxon>
    </lineage>
</organism>
<proteinExistence type="evidence at protein level"/>
<keyword id="KW-0002">3D-structure</keyword>
<keyword id="KW-0007">Acetylation</keyword>
<keyword id="KW-0963">Cytoplasm</keyword>
<keyword id="KW-1017">Isopeptide bond</keyword>
<keyword id="KW-0597">Phosphoprotein</keyword>
<keyword id="KW-1185">Reference proteome</keyword>
<keyword id="KW-0687">Ribonucleoprotein</keyword>
<keyword id="KW-0689">Ribosomal protein</keyword>
<keyword id="KW-0832">Ubl conjugation</keyword>
<sequence>MAKIKARDLRGKKKEELLKQLDDLKVELSQLRVAKVTGGAASKLSKIRVVRKSIARVLTVINQTQKENLRKFYKGKKYKPLDLRPKKTRAMRRRLNKHEESLKTKKQQRKERLYPLRKYAVKA</sequence>